<organism>
    <name type="scientific">Homo sapiens</name>
    <name type="common">Human</name>
    <dbReference type="NCBI Taxonomy" id="9606"/>
    <lineage>
        <taxon>Eukaryota</taxon>
        <taxon>Metazoa</taxon>
        <taxon>Chordata</taxon>
        <taxon>Craniata</taxon>
        <taxon>Vertebrata</taxon>
        <taxon>Euteleostomi</taxon>
        <taxon>Mammalia</taxon>
        <taxon>Eutheria</taxon>
        <taxon>Euarchontoglires</taxon>
        <taxon>Primates</taxon>
        <taxon>Haplorrhini</taxon>
        <taxon>Catarrhini</taxon>
        <taxon>Hominidae</taxon>
        <taxon>Homo</taxon>
    </lineage>
</organism>
<feature type="chain" id="PRO_0000184455" description="T-box transcription factor TBX22">
    <location>
        <begin position="1"/>
        <end position="520"/>
    </location>
</feature>
<feature type="DNA-binding region" description="T-box" evidence="1">
    <location>
        <begin position="96"/>
        <end position="283"/>
    </location>
</feature>
<feature type="region of interest" description="Disordered" evidence="2">
    <location>
        <begin position="1"/>
        <end position="91"/>
    </location>
</feature>
<feature type="compositionally biased region" description="Basic and acidic residues" evidence="2">
    <location>
        <begin position="33"/>
        <end position="49"/>
    </location>
</feature>
<feature type="compositionally biased region" description="Low complexity" evidence="2">
    <location>
        <begin position="67"/>
        <end position="84"/>
    </location>
</feature>
<feature type="splice variant" id="VSP_040987" description="In isoform 2." evidence="9">
    <location>
        <begin position="1"/>
        <end position="120"/>
    </location>
</feature>
<feature type="sequence variant" id="VAR_036066" description="In a colorectal cancer sample; somatic mutation." evidence="6">
    <original>V</original>
    <variation>A</variation>
    <location>
        <position position="16"/>
    </location>
</feature>
<feature type="sequence variant" id="VAR_036067" description="In a colorectal cancer sample; somatic mutation." evidence="6">
    <original>A</original>
    <variation>T</variation>
    <location>
        <position position="51"/>
    </location>
</feature>
<feature type="sequence variant" id="VAR_015383" description="In CPX; dbSNP:rs104894944." evidence="3">
    <original>G</original>
    <variation>C</variation>
    <location>
        <position position="118"/>
    </location>
</feature>
<feature type="sequence variant" id="VAR_021831" description="In CPX." evidence="5">
    <original>M</original>
    <variation>V</variation>
    <location>
        <position position="121"/>
    </location>
</feature>
<feature type="sequence variant" id="VAR_021832" description="In CPX." evidence="5">
    <original>P</original>
    <variation>L</variation>
    <location>
        <position position="183"/>
    </location>
</feature>
<feature type="sequence variant" id="VAR_021833" description="In dbSNP:rs34244923." evidence="5">
    <original>E</original>
    <variation>K</variation>
    <location>
        <position position="187"/>
    </location>
</feature>
<feature type="sequence variant" id="VAR_069900" description="In CPX." evidence="4">
    <original>S</original>
    <variation>SS</variation>
    <location>
        <position position="195"/>
    </location>
</feature>
<feature type="sequence variant" id="VAR_021829" description="In CPX; dbSNP:rs104894946." evidence="4">
    <original>L</original>
    <variation>P</variation>
    <location>
        <position position="214"/>
    </location>
</feature>
<feature type="sequence variant" id="VAR_069416" evidence="8">
    <original>F</original>
    <variation>Y</variation>
    <location>
        <position position="249"/>
    </location>
</feature>
<feature type="sequence variant" id="VAR_015384" description="In CPX; dbSNP:rs104894943." evidence="3">
    <original>T</original>
    <variation>M</variation>
    <location>
        <position position="260"/>
    </location>
</feature>
<feature type="sequence variant" id="VAR_021830" description="In CPX; dbSNP:rs28935177." evidence="5">
    <original>N</original>
    <variation>Y</variation>
    <location>
        <position position="264"/>
    </location>
</feature>
<feature type="sequence variant" id="VAR_036068" description="In a colorectal cancer sample; somatic mutation; dbSNP:rs750292974." evidence="6">
    <original>D</original>
    <variation>N</variation>
    <location>
        <position position="307"/>
    </location>
</feature>
<name>TBX22_HUMAN</name>
<sequence>MALSSRARAFSVEALVGRPSKRKLQDPIQAEQPELREKKGGEEEEERRSSAAGKSEPLEKQPKTEPSTSASSGCGSDSGYGNSSESLEEKDIQMELQGSELWKRFHDIGTEMIITKAGRRMFPSVRVKVKGLDPGKQYHVAIDVVPVDSKRYRYVYHSSQWMVAGNTDHLCIIPRFYVHPDSPCSGETWMRQIISFDRMKLTNNEMDDKGHIILQSMHKYKPRVHVIEQGSSVDLSQIQSLPTEGVKTFSFKETEFTTVTAYQNQQITKLKIERNPFAKGFRDTGRNRGVLDGLLETYPWRPSFTLDFKTFGADTQSGSSGSSPVTSSGGAPSPLNSLLSPLCFSPMFHLPTSSLGMPCPEAYLPNVNLPLCYKICPTNFWQQQPLVLPAPERLASSNSSQSLAPLMMEVPMLSSLGVTNSKSGSSEDSSDQYLQAPNSTNQMLYGLQSPGNIFLPNSITPEALSCSFHPSYDFYRYNFSMPSRLISGSNHLKVNDDSQVSFGEGKCNHVHWYPAINHYL</sequence>
<gene>
    <name type="primary">TBX22</name>
    <name type="synonym">TBOX22</name>
</gene>
<keyword id="KW-0025">Alternative splicing</keyword>
<keyword id="KW-0209">Deafness</keyword>
<keyword id="KW-0225">Disease variant</keyword>
<keyword id="KW-0238">DNA-binding</keyword>
<keyword id="KW-0242">Dwarfism</keyword>
<keyword id="KW-0539">Nucleus</keyword>
<keyword id="KW-1185">Reference proteome</keyword>
<keyword id="KW-0804">Transcription</keyword>
<keyword id="KW-0805">Transcription regulation</keyword>
<comment type="function">
    <text>Probable transcriptional regulator involved in developmental processes. This is major determinant crucial to palatogenesis.</text>
</comment>
<comment type="interaction">
    <interactant intactId="EBI-6427217">
        <id>Q9Y458</id>
    </interactant>
    <interactant intactId="EBI-930964">
        <id>P54253</id>
        <label>ATXN1</label>
    </interactant>
    <organismsDiffer>false</organismsDiffer>
    <experiments>3</experiments>
</comment>
<comment type="interaction">
    <interactant intactId="EBI-6427217">
        <id>Q9Y458</id>
    </interactant>
    <interactant intactId="EBI-946046">
        <id>P54252</id>
        <label>ATXN3</label>
    </interactant>
    <organismsDiffer>false</organismsDiffer>
    <experiments>3</experiments>
</comment>
<comment type="interaction">
    <interactant intactId="EBI-6427217">
        <id>Q9Y458</id>
    </interactant>
    <interactant intactId="EBI-1752118">
        <id>P31273</id>
        <label>HOXC8</label>
    </interactant>
    <organismsDiffer>false</organismsDiffer>
    <experiments>3</experiments>
</comment>
<comment type="interaction">
    <interactant intactId="EBI-6427217">
        <id>Q9Y458</id>
    </interactant>
    <interactant intactId="EBI-466029">
        <id>P42858</id>
        <label>HTT</label>
    </interactant>
    <organismsDiffer>false</organismsDiffer>
    <experiments>12</experiments>
</comment>
<comment type="interaction">
    <interactant intactId="EBI-6427217">
        <id>Q9Y458</id>
    </interactant>
    <interactant intactId="EBI-748265">
        <id>P78337</id>
        <label>PITX1</label>
    </interactant>
    <organismsDiffer>false</organismsDiffer>
    <experiments>3</experiments>
</comment>
<comment type="interaction">
    <interactant intactId="EBI-6427217">
        <id>Q9Y458</id>
    </interactant>
    <interactant intactId="EBI-12138495">
        <id>Q99697-2</id>
        <label>PITX2</label>
    </interactant>
    <organismsDiffer>false</organismsDiffer>
    <experiments>3</experiments>
</comment>
<comment type="interaction">
    <interactant intactId="EBI-6427217">
        <id>Q9Y458</id>
    </interactant>
    <interactant intactId="EBI-9027467">
        <id>O75360</id>
        <label>PROP1</label>
    </interactant>
    <organismsDiffer>false</organismsDiffer>
    <experiments>3</experiments>
</comment>
<comment type="interaction">
    <interactant intactId="EBI-6427217">
        <id>Q9Y458</id>
    </interactant>
    <interactant intactId="EBI-372899">
        <id>Q13148</id>
        <label>TARDBP</label>
    </interactant>
    <organismsDiffer>false</organismsDiffer>
    <experiments>6</experiments>
</comment>
<comment type="interaction">
    <interactant intactId="EBI-6427217">
        <id>Q9Y458</id>
    </interactant>
    <interactant intactId="EBI-3939165">
        <id>O43711</id>
        <label>TLX3</label>
    </interactant>
    <organismsDiffer>false</organismsDiffer>
    <experiments>3</experiments>
</comment>
<comment type="interaction">
    <interactant intactId="EBI-6427217">
        <id>Q9Y458</id>
    </interactant>
    <interactant intactId="EBI-10191303">
        <id>O95231</id>
        <label>VENTX</label>
    </interactant>
    <organismsDiffer>false</organismsDiffer>
    <experiments>6</experiments>
</comment>
<comment type="interaction">
    <interactant intactId="EBI-6427217">
        <id>Q9Y458</id>
    </interactant>
    <interactant intactId="EBI-2510804">
        <id>Q5VVQ6</id>
        <label>YOD1</label>
    </interactant>
    <organismsDiffer>false</organismsDiffer>
    <experiments>3</experiments>
</comment>
<comment type="subcellular location">
    <subcellularLocation>
        <location evidence="1">Nucleus</location>
    </subcellularLocation>
</comment>
<comment type="alternative products">
    <event type="alternative splicing"/>
    <isoform>
        <id>Q9Y458-1</id>
        <name>1</name>
        <sequence type="displayed"/>
    </isoform>
    <isoform>
        <id>Q9Y458-2</id>
        <name>2</name>
        <sequence type="described" ref="VSP_040987"/>
    </isoform>
</comment>
<comment type="tissue specificity">
    <text>Seems to be expressed at a low level.</text>
</comment>
<comment type="disease" evidence="3 4 5">
    <disease id="DI-02436">
        <name>Cleft palate with or without ankyloglossia, X-linked</name>
        <acronym>CPX</acronym>
        <description>A congenital mouth abnormality characterized by fissure of the soft and/or hard palate, due to faulty fusion. Some patients also manifest ankyloglossia, a condition in which movements of the tongue are restricted. Complete ankyloglossia is due to fusion between the tongue and the floor of the mouth. Partial ankyloglossia is due to a short lingual frenum or one which is attached too near the tip of the tongue.</description>
        <dbReference type="MIM" id="303400"/>
    </disease>
    <text>The disease is caused by variants affecting the gene represented in this entry.</text>
</comment>
<comment type="disease" evidence="7">
    <disease id="DI-03763">
        <name>Abruzzo-Erickson syndrome</name>
        <acronym>ABERS</acronym>
        <description>A disease characterized by cleft palate, coloboma, hypospadias, deafness, short stature, and radial synostosis.</description>
        <dbReference type="MIM" id="302905"/>
    </disease>
    <text>The disease is caused by variants affecting the gene represented in this entry.</text>
</comment>
<evidence type="ECO:0000255" key="1">
    <source>
        <dbReference type="PROSITE-ProRule" id="PRU00201"/>
    </source>
</evidence>
<evidence type="ECO:0000256" key="2">
    <source>
        <dbReference type="SAM" id="MobiDB-lite"/>
    </source>
</evidence>
<evidence type="ECO:0000269" key="3">
    <source>
    </source>
</evidence>
<evidence type="ECO:0000269" key="4">
    <source>
    </source>
</evidence>
<evidence type="ECO:0000269" key="5">
    <source>
    </source>
</evidence>
<evidence type="ECO:0000269" key="6">
    <source>
    </source>
</evidence>
<evidence type="ECO:0000269" key="7">
    <source>
    </source>
</evidence>
<evidence type="ECO:0000269" key="8">
    <source>
    </source>
</evidence>
<evidence type="ECO:0000303" key="9">
    <source>
    </source>
</evidence>
<reference key="1">
    <citation type="journal article" date="2000" name="Gene">
        <title>Molecular characterization of a new human T-box gene (TBX22) located in Xq21.1 encoding a protein containing a truncated T-domain.</title>
        <authorList>
            <person name="Laugier-Anfossi F."/>
            <person name="Villard L."/>
        </authorList>
    </citation>
    <scope>NUCLEOTIDE SEQUENCE [MRNA] (ISOFORM 2)</scope>
</reference>
<reference key="2">
    <citation type="journal article" date="2001" name="Nat. Genet.">
        <title>The T-box transcription factor gene TBX22 is mutated in X-linked cleft palate and ankyloglossia.</title>
        <authorList>
            <person name="Braybrook C."/>
            <person name="Doudney K."/>
            <person name="Marcano A.C."/>
            <person name="Arnason A."/>
            <person name="Bjornsson A."/>
            <person name="Patton M.A."/>
            <person name="Goodfellow P.J."/>
            <person name="Moore G.E."/>
            <person name="Stanier P."/>
        </authorList>
    </citation>
    <scope>NUCLEOTIDE SEQUENCE [GENOMIC DNA / MRNA] (ISOFORM 1)</scope>
    <scope>VARIANTS CPX CYS-118 AND MET-260</scope>
</reference>
<reference key="3">
    <citation type="journal article" date="2005" name="Nature">
        <title>The DNA sequence of the human X chromosome.</title>
        <authorList>
            <person name="Ross M.T."/>
            <person name="Grafham D.V."/>
            <person name="Coffey A.J."/>
            <person name="Scherer S."/>
            <person name="McLay K."/>
            <person name="Muzny D."/>
            <person name="Platzer M."/>
            <person name="Howell G.R."/>
            <person name="Burrows C."/>
            <person name="Bird C.P."/>
            <person name="Frankish A."/>
            <person name="Lovell F.L."/>
            <person name="Howe K.L."/>
            <person name="Ashurst J.L."/>
            <person name="Fulton R.S."/>
            <person name="Sudbrak R."/>
            <person name="Wen G."/>
            <person name="Jones M.C."/>
            <person name="Hurles M.E."/>
            <person name="Andrews T.D."/>
            <person name="Scott C.E."/>
            <person name="Searle S."/>
            <person name="Ramser J."/>
            <person name="Whittaker A."/>
            <person name="Deadman R."/>
            <person name="Carter N.P."/>
            <person name="Hunt S.E."/>
            <person name="Chen R."/>
            <person name="Cree A."/>
            <person name="Gunaratne P."/>
            <person name="Havlak P."/>
            <person name="Hodgson A."/>
            <person name="Metzker M.L."/>
            <person name="Richards S."/>
            <person name="Scott G."/>
            <person name="Steffen D."/>
            <person name="Sodergren E."/>
            <person name="Wheeler D.A."/>
            <person name="Worley K.C."/>
            <person name="Ainscough R."/>
            <person name="Ambrose K.D."/>
            <person name="Ansari-Lari M.A."/>
            <person name="Aradhya S."/>
            <person name="Ashwell R.I."/>
            <person name="Babbage A.K."/>
            <person name="Bagguley C.L."/>
            <person name="Ballabio A."/>
            <person name="Banerjee R."/>
            <person name="Barker G.E."/>
            <person name="Barlow K.F."/>
            <person name="Barrett I.P."/>
            <person name="Bates K.N."/>
            <person name="Beare D.M."/>
            <person name="Beasley H."/>
            <person name="Beasley O."/>
            <person name="Beck A."/>
            <person name="Bethel G."/>
            <person name="Blechschmidt K."/>
            <person name="Brady N."/>
            <person name="Bray-Allen S."/>
            <person name="Bridgeman A.M."/>
            <person name="Brown A.J."/>
            <person name="Brown M.J."/>
            <person name="Bonnin D."/>
            <person name="Bruford E.A."/>
            <person name="Buhay C."/>
            <person name="Burch P."/>
            <person name="Burford D."/>
            <person name="Burgess J."/>
            <person name="Burrill W."/>
            <person name="Burton J."/>
            <person name="Bye J.M."/>
            <person name="Carder C."/>
            <person name="Carrel L."/>
            <person name="Chako J."/>
            <person name="Chapman J.C."/>
            <person name="Chavez D."/>
            <person name="Chen E."/>
            <person name="Chen G."/>
            <person name="Chen Y."/>
            <person name="Chen Z."/>
            <person name="Chinault C."/>
            <person name="Ciccodicola A."/>
            <person name="Clark S.Y."/>
            <person name="Clarke G."/>
            <person name="Clee C.M."/>
            <person name="Clegg S."/>
            <person name="Clerc-Blankenburg K."/>
            <person name="Clifford K."/>
            <person name="Cobley V."/>
            <person name="Cole C.G."/>
            <person name="Conquer J.S."/>
            <person name="Corby N."/>
            <person name="Connor R.E."/>
            <person name="David R."/>
            <person name="Davies J."/>
            <person name="Davis C."/>
            <person name="Davis J."/>
            <person name="Delgado O."/>
            <person name="Deshazo D."/>
            <person name="Dhami P."/>
            <person name="Ding Y."/>
            <person name="Dinh H."/>
            <person name="Dodsworth S."/>
            <person name="Draper H."/>
            <person name="Dugan-Rocha S."/>
            <person name="Dunham A."/>
            <person name="Dunn M."/>
            <person name="Durbin K.J."/>
            <person name="Dutta I."/>
            <person name="Eades T."/>
            <person name="Ellwood M."/>
            <person name="Emery-Cohen A."/>
            <person name="Errington H."/>
            <person name="Evans K.L."/>
            <person name="Faulkner L."/>
            <person name="Francis F."/>
            <person name="Frankland J."/>
            <person name="Fraser A.E."/>
            <person name="Galgoczy P."/>
            <person name="Gilbert J."/>
            <person name="Gill R."/>
            <person name="Gloeckner G."/>
            <person name="Gregory S.G."/>
            <person name="Gribble S."/>
            <person name="Griffiths C."/>
            <person name="Grocock R."/>
            <person name="Gu Y."/>
            <person name="Gwilliam R."/>
            <person name="Hamilton C."/>
            <person name="Hart E.A."/>
            <person name="Hawes A."/>
            <person name="Heath P.D."/>
            <person name="Heitmann K."/>
            <person name="Hennig S."/>
            <person name="Hernandez J."/>
            <person name="Hinzmann B."/>
            <person name="Ho S."/>
            <person name="Hoffs M."/>
            <person name="Howden P.J."/>
            <person name="Huckle E.J."/>
            <person name="Hume J."/>
            <person name="Hunt P.J."/>
            <person name="Hunt A.R."/>
            <person name="Isherwood J."/>
            <person name="Jacob L."/>
            <person name="Johnson D."/>
            <person name="Jones S."/>
            <person name="de Jong P.J."/>
            <person name="Joseph S.S."/>
            <person name="Keenan S."/>
            <person name="Kelly S."/>
            <person name="Kershaw J.K."/>
            <person name="Khan Z."/>
            <person name="Kioschis P."/>
            <person name="Klages S."/>
            <person name="Knights A.J."/>
            <person name="Kosiura A."/>
            <person name="Kovar-Smith C."/>
            <person name="Laird G.K."/>
            <person name="Langford C."/>
            <person name="Lawlor S."/>
            <person name="Leversha M."/>
            <person name="Lewis L."/>
            <person name="Liu W."/>
            <person name="Lloyd C."/>
            <person name="Lloyd D.M."/>
            <person name="Loulseged H."/>
            <person name="Loveland J.E."/>
            <person name="Lovell J.D."/>
            <person name="Lozado R."/>
            <person name="Lu J."/>
            <person name="Lyne R."/>
            <person name="Ma J."/>
            <person name="Maheshwari M."/>
            <person name="Matthews L.H."/>
            <person name="McDowall J."/>
            <person name="McLaren S."/>
            <person name="McMurray A."/>
            <person name="Meidl P."/>
            <person name="Meitinger T."/>
            <person name="Milne S."/>
            <person name="Miner G."/>
            <person name="Mistry S.L."/>
            <person name="Morgan M."/>
            <person name="Morris S."/>
            <person name="Mueller I."/>
            <person name="Mullikin J.C."/>
            <person name="Nguyen N."/>
            <person name="Nordsiek G."/>
            <person name="Nyakatura G."/>
            <person name="O'dell C.N."/>
            <person name="Okwuonu G."/>
            <person name="Palmer S."/>
            <person name="Pandian R."/>
            <person name="Parker D."/>
            <person name="Parrish J."/>
            <person name="Pasternak S."/>
            <person name="Patel D."/>
            <person name="Pearce A.V."/>
            <person name="Pearson D.M."/>
            <person name="Pelan S.E."/>
            <person name="Perez L."/>
            <person name="Porter K.M."/>
            <person name="Ramsey Y."/>
            <person name="Reichwald K."/>
            <person name="Rhodes S."/>
            <person name="Ridler K.A."/>
            <person name="Schlessinger D."/>
            <person name="Schueler M.G."/>
            <person name="Sehra H.K."/>
            <person name="Shaw-Smith C."/>
            <person name="Shen H."/>
            <person name="Sheridan E.M."/>
            <person name="Shownkeen R."/>
            <person name="Skuce C.D."/>
            <person name="Smith M.L."/>
            <person name="Sotheran E.C."/>
            <person name="Steingruber H.E."/>
            <person name="Steward C.A."/>
            <person name="Storey R."/>
            <person name="Swann R.M."/>
            <person name="Swarbreck D."/>
            <person name="Tabor P.E."/>
            <person name="Taudien S."/>
            <person name="Taylor T."/>
            <person name="Teague B."/>
            <person name="Thomas K."/>
            <person name="Thorpe A."/>
            <person name="Timms K."/>
            <person name="Tracey A."/>
            <person name="Trevanion S."/>
            <person name="Tromans A.C."/>
            <person name="d'Urso M."/>
            <person name="Verduzco D."/>
            <person name="Villasana D."/>
            <person name="Waldron L."/>
            <person name="Wall M."/>
            <person name="Wang Q."/>
            <person name="Warren J."/>
            <person name="Warry G.L."/>
            <person name="Wei X."/>
            <person name="West A."/>
            <person name="Whitehead S.L."/>
            <person name="Whiteley M.N."/>
            <person name="Wilkinson J.E."/>
            <person name="Willey D.L."/>
            <person name="Williams G."/>
            <person name="Williams L."/>
            <person name="Williamson A."/>
            <person name="Williamson H."/>
            <person name="Wilming L."/>
            <person name="Woodmansey R.L."/>
            <person name="Wray P.W."/>
            <person name="Yen J."/>
            <person name="Zhang J."/>
            <person name="Zhou J."/>
            <person name="Zoghbi H."/>
            <person name="Zorilla S."/>
            <person name="Buck D."/>
            <person name="Reinhardt R."/>
            <person name="Poustka A."/>
            <person name="Rosenthal A."/>
            <person name="Lehrach H."/>
            <person name="Meindl A."/>
            <person name="Minx P.J."/>
            <person name="Hillier L.W."/>
            <person name="Willard H.F."/>
            <person name="Wilson R.K."/>
            <person name="Waterston R.H."/>
            <person name="Rice C.M."/>
            <person name="Vaudin M."/>
            <person name="Coulson A."/>
            <person name="Nelson D.L."/>
            <person name="Weinstock G."/>
            <person name="Sulston J.E."/>
            <person name="Durbin R.M."/>
            <person name="Hubbard T."/>
            <person name="Gibbs R.A."/>
            <person name="Beck S."/>
            <person name="Rogers J."/>
            <person name="Bentley D.R."/>
        </authorList>
    </citation>
    <scope>NUCLEOTIDE SEQUENCE [LARGE SCALE GENOMIC DNA]</scope>
</reference>
<reference key="4">
    <citation type="submission" date="2005-09" db="EMBL/GenBank/DDBJ databases">
        <authorList>
            <person name="Mural R.J."/>
            <person name="Istrail S."/>
            <person name="Sutton G."/>
            <person name="Florea L."/>
            <person name="Halpern A.L."/>
            <person name="Mobarry C.M."/>
            <person name="Lippert R."/>
            <person name="Walenz B."/>
            <person name="Shatkay H."/>
            <person name="Dew I."/>
            <person name="Miller J.R."/>
            <person name="Flanigan M.J."/>
            <person name="Edwards N.J."/>
            <person name="Bolanos R."/>
            <person name="Fasulo D."/>
            <person name="Halldorsson B.V."/>
            <person name="Hannenhalli S."/>
            <person name="Turner R."/>
            <person name="Yooseph S."/>
            <person name="Lu F."/>
            <person name="Nusskern D.R."/>
            <person name="Shue B.C."/>
            <person name="Zheng X.H."/>
            <person name="Zhong F."/>
            <person name="Delcher A.L."/>
            <person name="Huson D.H."/>
            <person name="Kravitz S.A."/>
            <person name="Mouchard L."/>
            <person name="Reinert K."/>
            <person name="Remington K.A."/>
            <person name="Clark A.G."/>
            <person name="Waterman M.S."/>
            <person name="Eichler E.E."/>
            <person name="Adams M.D."/>
            <person name="Hunkapiller M.W."/>
            <person name="Myers E.W."/>
            <person name="Venter J.C."/>
        </authorList>
    </citation>
    <scope>NUCLEOTIDE SEQUENCE [LARGE SCALE GENOMIC DNA]</scope>
</reference>
<reference key="5">
    <citation type="journal article" date="2004" name="Genome Res.">
        <title>The status, quality, and expansion of the NIH full-length cDNA project: the Mammalian Gene Collection (MGC).</title>
        <authorList>
            <consortium name="The MGC Project Team"/>
        </authorList>
    </citation>
    <scope>NUCLEOTIDE SEQUENCE [LARGE SCALE MRNA] (ISOFORM 1)</scope>
    <source>
        <tissue>Skin</tissue>
    </source>
</reference>
<reference key="6">
    <citation type="journal article" date="2013" name="Clin. Genet.">
        <title>X-linked CHARGE-like Abruzzo-Erickson syndrome and classic cleft palate with ankyloglossia result from TBX22 splicing mutations.</title>
        <authorList>
            <person name="Pauws E."/>
            <person name="Peskett E."/>
            <person name="Boissin C."/>
            <person name="Hoshino A."/>
            <person name="Mengrelis K."/>
            <person name="Carta E."/>
            <person name="Abruzzo M.A."/>
            <person name="Lees M."/>
            <person name="Moore G.E."/>
            <person name="Erickson R.P."/>
            <person name="Stanier P."/>
        </authorList>
    </citation>
    <scope>INVOLVEMENT IN ABERS</scope>
</reference>
<reference key="7">
    <citation type="journal article" date="2002" name="Hum. Mol. Genet.">
        <title>Craniofacial expression of human and murine TBX22 correlates with the cleft palate and ankyloglossia phenotype observed in CPX patients.</title>
        <authorList>
            <person name="Braybrook C."/>
            <person name="Lisgo S."/>
            <person name="Doudney K."/>
            <person name="Henderson D."/>
            <person name="Marcano A.C.B."/>
            <person name="Strachan T."/>
            <person name="Patton M.A."/>
            <person name="Villard L."/>
            <person name="Moore G.E."/>
            <person name="Stanier P."/>
            <person name="Lindsay S."/>
        </authorList>
    </citation>
    <scope>VARIANTS CPX SER-195 INS AND PRO-214</scope>
</reference>
<reference key="8">
    <citation type="journal article" date="2004" name="J. Med. Genet.">
        <title>TBX22 mutations are a frequent cause of cleft palate.</title>
        <authorList>
            <person name="Marcano A.C.B."/>
            <person name="Doudney K."/>
            <person name="Braybrook C."/>
            <person name="Squires R."/>
            <person name="Patton M.A."/>
            <person name="Lees M.M."/>
            <person name="Richieri-Costa A."/>
            <person name="Lidral A.C."/>
            <person name="Murray J.C."/>
            <person name="Moore G.E."/>
            <person name="Stanier P."/>
        </authorList>
    </citation>
    <scope>VARIANTS CPX VAL-121; LEU-183 AND TYR-264</scope>
    <scope>VARIANT LYS-187</scope>
</reference>
<reference key="9">
    <citation type="journal article" date="2006" name="Science">
        <title>The consensus coding sequences of human breast and colorectal cancers.</title>
        <authorList>
            <person name="Sjoeblom T."/>
            <person name="Jones S."/>
            <person name="Wood L.D."/>
            <person name="Parsons D.W."/>
            <person name="Lin J."/>
            <person name="Barber T.D."/>
            <person name="Mandelker D."/>
            <person name="Leary R.J."/>
            <person name="Ptak J."/>
            <person name="Silliman N."/>
            <person name="Szabo S."/>
            <person name="Buckhaults P."/>
            <person name="Farrell C."/>
            <person name="Meeh P."/>
            <person name="Markowitz S.D."/>
            <person name="Willis J."/>
            <person name="Dawson D."/>
            <person name="Willson J.K.V."/>
            <person name="Gazdar A.F."/>
            <person name="Hartigan J."/>
            <person name="Wu L."/>
            <person name="Liu C."/>
            <person name="Parmigiani G."/>
            <person name="Park B.H."/>
            <person name="Bachman K.E."/>
            <person name="Papadopoulos N."/>
            <person name="Vogelstein B."/>
            <person name="Kinzler K.W."/>
            <person name="Velculescu V.E."/>
        </authorList>
    </citation>
    <scope>VARIANTS [LARGE SCALE ANALYSIS] ALA-16; THR-51 AND ASN-307</scope>
</reference>
<reference key="10">
    <citation type="journal article" date="2012" name="N. Engl. J. Med.">
        <title>Diagnostic exome sequencing in persons with severe intellectual disability.</title>
        <authorList>
            <person name="de Ligt J."/>
            <person name="Willemsen M.H."/>
            <person name="van Bon B.W."/>
            <person name="Kleefstra T."/>
            <person name="Yntema H.G."/>
            <person name="Kroes T."/>
            <person name="Vulto-van Silfhout A.T."/>
            <person name="Koolen D.A."/>
            <person name="de Vries P."/>
            <person name="Gilissen C."/>
            <person name="del Rosario M."/>
            <person name="Hoischen A."/>
            <person name="Scheffer H."/>
            <person name="de Vries B.B."/>
            <person name="Brunner H.G."/>
            <person name="Veltman J.A."/>
            <person name="Vissers L.E."/>
        </authorList>
    </citation>
    <scope>VARIANT TYR-249</scope>
</reference>
<dbReference type="EMBL" id="AY035371">
    <property type="protein sequence ID" value="AAK63189.1"/>
    <property type="molecule type" value="mRNA"/>
</dbReference>
<dbReference type="EMBL" id="AL031000">
    <property type="status" value="NOT_ANNOTATED_CDS"/>
    <property type="molecule type" value="Genomic_DNA"/>
</dbReference>
<dbReference type="EMBL" id="CH471104">
    <property type="protein sequence ID" value="EAW98588.1"/>
    <property type="molecule type" value="Genomic_DNA"/>
</dbReference>
<dbReference type="EMBL" id="BC014194">
    <property type="protein sequence ID" value="AAH14194.2"/>
    <property type="molecule type" value="mRNA"/>
</dbReference>
<dbReference type="EMBL" id="AF251684">
    <property type="protein sequence ID" value="AAG23749.1"/>
    <property type="molecule type" value="mRNA"/>
</dbReference>
<dbReference type="CCDS" id="CCDS14445.1">
    <molecule id="Q9Y458-1"/>
</dbReference>
<dbReference type="RefSeq" id="NP_001103348.1">
    <molecule id="Q9Y458-1"/>
    <property type="nucleotide sequence ID" value="NM_001109878.2"/>
</dbReference>
<dbReference type="RefSeq" id="NP_001103349.1">
    <molecule id="Q9Y458-2"/>
    <property type="nucleotide sequence ID" value="NM_001109879.2"/>
</dbReference>
<dbReference type="RefSeq" id="NP_001290404.1">
    <molecule id="Q9Y458-2"/>
    <property type="nucleotide sequence ID" value="NM_001303475.1"/>
</dbReference>
<dbReference type="RefSeq" id="NP_058650.1">
    <molecule id="Q9Y458-1"/>
    <property type="nucleotide sequence ID" value="NM_016954.2"/>
</dbReference>
<dbReference type="RefSeq" id="XP_011529274.1">
    <property type="nucleotide sequence ID" value="XM_011530972.1"/>
</dbReference>
<dbReference type="SMR" id="Q9Y458"/>
<dbReference type="BioGRID" id="119172">
    <property type="interactions" value="11"/>
</dbReference>
<dbReference type="ELM" id="Q9Y458"/>
<dbReference type="FunCoup" id="Q9Y458">
    <property type="interactions" value="171"/>
</dbReference>
<dbReference type="IntAct" id="Q9Y458">
    <property type="interactions" value="15"/>
</dbReference>
<dbReference type="STRING" id="9606.ENSP00000362393"/>
<dbReference type="iPTMnet" id="Q9Y458"/>
<dbReference type="PhosphoSitePlus" id="Q9Y458"/>
<dbReference type="BioMuta" id="TBX22"/>
<dbReference type="DMDM" id="28381405"/>
<dbReference type="MassIVE" id="Q9Y458"/>
<dbReference type="PaxDb" id="9606-ENSP00000362390"/>
<dbReference type="PeptideAtlas" id="Q9Y458"/>
<dbReference type="ProteomicsDB" id="86105">
    <molecule id="Q9Y458-1"/>
</dbReference>
<dbReference type="ProteomicsDB" id="86106">
    <molecule id="Q9Y458-2"/>
</dbReference>
<dbReference type="Antibodypedia" id="510">
    <property type="antibodies" value="200 antibodies from 28 providers"/>
</dbReference>
<dbReference type="DNASU" id="50945"/>
<dbReference type="Ensembl" id="ENST00000373294.8">
    <molecule id="Q9Y458-1"/>
    <property type="protein sequence ID" value="ENSP00000362390.5"/>
    <property type="gene ID" value="ENSG00000122145.15"/>
</dbReference>
<dbReference type="Ensembl" id="ENST00000373296.8">
    <molecule id="Q9Y458-1"/>
    <property type="protein sequence ID" value="ENSP00000362393.3"/>
    <property type="gene ID" value="ENSG00000122145.15"/>
</dbReference>
<dbReference type="Ensembl" id="ENST00000619509.1">
    <molecule id="Q9Y458-1"/>
    <property type="protein sequence ID" value="ENSP00000479825.1"/>
    <property type="gene ID" value="ENSG00000277800.3"/>
</dbReference>
<dbReference type="Ensembl" id="ENST00000628957.2">
    <molecule id="Q9Y458-1"/>
    <property type="protein sequence ID" value="ENSP00000487295.1"/>
    <property type="gene ID" value="ENSG00000277800.3"/>
</dbReference>
<dbReference type="GeneID" id="50945"/>
<dbReference type="KEGG" id="hsa:50945"/>
<dbReference type="MANE-Select" id="ENST00000373296.8">
    <property type="protein sequence ID" value="ENSP00000362393.3"/>
    <property type="RefSeq nucleotide sequence ID" value="NM_001109878.2"/>
    <property type="RefSeq protein sequence ID" value="NP_001103348.1"/>
</dbReference>
<dbReference type="UCSC" id="uc004edj.2">
    <molecule id="Q9Y458-1"/>
    <property type="organism name" value="human"/>
</dbReference>
<dbReference type="AGR" id="HGNC:11600"/>
<dbReference type="CTD" id="50945"/>
<dbReference type="DisGeNET" id="50945"/>
<dbReference type="GeneCards" id="TBX22"/>
<dbReference type="HGNC" id="HGNC:11600">
    <property type="gene designation" value="TBX22"/>
</dbReference>
<dbReference type="HPA" id="ENSG00000122145">
    <property type="expression patterns" value="Group enriched (testis, thyroid gland)"/>
</dbReference>
<dbReference type="MalaCards" id="TBX22"/>
<dbReference type="MIM" id="300307">
    <property type="type" value="gene"/>
</dbReference>
<dbReference type="MIM" id="302905">
    <property type="type" value="phenotype"/>
</dbReference>
<dbReference type="MIM" id="303400">
    <property type="type" value="phenotype"/>
</dbReference>
<dbReference type="neXtProt" id="NX_Q9Y458"/>
<dbReference type="OpenTargets" id="ENSG00000122145"/>
<dbReference type="Orphanet" id="921">
    <property type="disease" value="Abruzzo-Erickson syndrome"/>
</dbReference>
<dbReference type="Orphanet" id="324601">
    <property type="disease" value="X-linked cleft palate and ankyloglossia"/>
</dbReference>
<dbReference type="PharmGKB" id="PA36363"/>
<dbReference type="VEuPathDB" id="HostDB:ENSG00000122145"/>
<dbReference type="eggNOG" id="KOG3586">
    <property type="taxonomic scope" value="Eukaryota"/>
</dbReference>
<dbReference type="GeneTree" id="ENSGT00940000161206"/>
<dbReference type="HOGENOM" id="CLU_030727_1_0_1"/>
<dbReference type="InParanoid" id="Q9Y458"/>
<dbReference type="OMA" id="EGKCNHA"/>
<dbReference type="OrthoDB" id="7442607at2759"/>
<dbReference type="PAN-GO" id="Q9Y458">
    <property type="GO annotations" value="4 GO annotations based on evolutionary models"/>
</dbReference>
<dbReference type="PhylomeDB" id="Q9Y458"/>
<dbReference type="TreeFam" id="TF106341"/>
<dbReference type="PathwayCommons" id="Q9Y458"/>
<dbReference type="SignaLink" id="Q9Y458"/>
<dbReference type="SIGNOR" id="Q9Y458"/>
<dbReference type="BioGRID-ORCS" id="50945">
    <property type="hits" value="18 hits in 790 CRISPR screens"/>
</dbReference>
<dbReference type="ChiTaRS" id="TBX22">
    <property type="organism name" value="human"/>
</dbReference>
<dbReference type="GeneWiki" id="TBX22"/>
<dbReference type="GenomeRNAi" id="50945"/>
<dbReference type="Pharos" id="Q9Y458">
    <property type="development level" value="Tbio"/>
</dbReference>
<dbReference type="PRO" id="PR:Q9Y458"/>
<dbReference type="Proteomes" id="UP000005640">
    <property type="component" value="Chromosome X"/>
</dbReference>
<dbReference type="RNAct" id="Q9Y458">
    <property type="molecule type" value="protein"/>
</dbReference>
<dbReference type="Bgee" id="ENSG00000122145">
    <property type="expression patterns" value="Expressed in left testis and 37 other cell types or tissues"/>
</dbReference>
<dbReference type="ExpressionAtlas" id="Q9Y458">
    <property type="expression patterns" value="baseline and differential"/>
</dbReference>
<dbReference type="GO" id="GO:0000785">
    <property type="term" value="C:chromatin"/>
    <property type="evidence" value="ECO:0000247"/>
    <property type="project" value="NTNU_SB"/>
</dbReference>
<dbReference type="GO" id="GO:0005634">
    <property type="term" value="C:nucleus"/>
    <property type="evidence" value="ECO:0000314"/>
    <property type="project" value="BHF-UCL"/>
</dbReference>
<dbReference type="GO" id="GO:0003677">
    <property type="term" value="F:DNA binding"/>
    <property type="evidence" value="ECO:0000314"/>
    <property type="project" value="BHF-UCL"/>
</dbReference>
<dbReference type="GO" id="GO:0000981">
    <property type="term" value="F:DNA-binding transcription factor activity, RNA polymerase II-specific"/>
    <property type="evidence" value="ECO:0000247"/>
    <property type="project" value="NTNU_SB"/>
</dbReference>
<dbReference type="GO" id="GO:0000978">
    <property type="term" value="F:RNA polymerase II cis-regulatory region sequence-specific DNA binding"/>
    <property type="evidence" value="ECO:0000318"/>
    <property type="project" value="GO_Central"/>
</dbReference>
<dbReference type="GO" id="GO:0000977">
    <property type="term" value="F:RNA polymerase II transcription regulatory region sequence-specific DNA binding"/>
    <property type="evidence" value="ECO:0000314"/>
    <property type="project" value="NTNU_SB"/>
</dbReference>
<dbReference type="GO" id="GO:0001708">
    <property type="term" value="P:cell fate specification"/>
    <property type="evidence" value="ECO:0000318"/>
    <property type="project" value="GO_Central"/>
</dbReference>
<dbReference type="GO" id="GO:0045892">
    <property type="term" value="P:negative regulation of DNA-templated transcription"/>
    <property type="evidence" value="ECO:0000314"/>
    <property type="project" value="BHF-UCL"/>
</dbReference>
<dbReference type="GO" id="GO:0000122">
    <property type="term" value="P:negative regulation of transcription by RNA polymerase II"/>
    <property type="evidence" value="ECO:0000314"/>
    <property type="project" value="BHF-UCL"/>
</dbReference>
<dbReference type="GO" id="GO:0045893">
    <property type="term" value="P:positive regulation of DNA-templated transcription"/>
    <property type="evidence" value="ECO:0007669"/>
    <property type="project" value="InterPro"/>
</dbReference>
<dbReference type="GO" id="GO:0006357">
    <property type="term" value="P:regulation of transcription by RNA polymerase II"/>
    <property type="evidence" value="ECO:0000318"/>
    <property type="project" value="GO_Central"/>
</dbReference>
<dbReference type="CDD" id="cd20200">
    <property type="entry name" value="T-box_TBX22-like"/>
    <property type="match status" value="1"/>
</dbReference>
<dbReference type="FunFam" id="2.60.40.820:FF:000001">
    <property type="entry name" value="T-box transcription factor TBX18"/>
    <property type="match status" value="1"/>
</dbReference>
<dbReference type="Gene3D" id="2.60.40.820">
    <property type="entry name" value="Transcription factor, T-box"/>
    <property type="match status" value="1"/>
</dbReference>
<dbReference type="InterPro" id="IPR008967">
    <property type="entry name" value="p53-like_TF_DNA-bd_sf"/>
</dbReference>
<dbReference type="InterPro" id="IPR046360">
    <property type="entry name" value="T-box_DNA-bd"/>
</dbReference>
<dbReference type="InterPro" id="IPR036960">
    <property type="entry name" value="T-box_sf"/>
</dbReference>
<dbReference type="InterPro" id="IPR001699">
    <property type="entry name" value="TF_T-box"/>
</dbReference>
<dbReference type="InterPro" id="IPR018186">
    <property type="entry name" value="TF_T-box_CS"/>
</dbReference>
<dbReference type="PANTHER" id="PTHR11267">
    <property type="entry name" value="T-BOX PROTEIN-RELATED"/>
    <property type="match status" value="1"/>
</dbReference>
<dbReference type="PANTHER" id="PTHR11267:SF116">
    <property type="entry name" value="T-BOX TRANSCRIPTION FACTOR TBX22"/>
    <property type="match status" value="1"/>
</dbReference>
<dbReference type="Pfam" id="PF00907">
    <property type="entry name" value="T-box"/>
    <property type="match status" value="1"/>
</dbReference>
<dbReference type="PRINTS" id="PR00937">
    <property type="entry name" value="TBOX"/>
</dbReference>
<dbReference type="SMART" id="SM00425">
    <property type="entry name" value="TBOX"/>
    <property type="match status" value="1"/>
</dbReference>
<dbReference type="SUPFAM" id="SSF49417">
    <property type="entry name" value="p53-like transcription factors"/>
    <property type="match status" value="1"/>
</dbReference>
<dbReference type="PROSITE" id="PS01283">
    <property type="entry name" value="TBOX_1"/>
    <property type="match status" value="1"/>
</dbReference>
<dbReference type="PROSITE" id="PS01264">
    <property type="entry name" value="TBOX_2"/>
    <property type="match status" value="1"/>
</dbReference>
<dbReference type="PROSITE" id="PS50252">
    <property type="entry name" value="TBOX_3"/>
    <property type="match status" value="1"/>
</dbReference>
<proteinExistence type="evidence at protein level"/>
<protein>
    <recommendedName>
        <fullName>T-box transcription factor TBX22</fullName>
        <shortName>T-box protein 22</shortName>
    </recommendedName>
</protein>
<accession>Q9Y458</accession>
<accession>Q5JZ06</accession>
<accession>Q96LC0</accession>
<accession>Q9HBF1</accession>